<proteinExistence type="inferred from homology"/>
<comment type="function">
    <text evidence="1">Bifunctional serine/threonine kinase and phosphorylase involved in the regulation of the phosphoenolpyruvate synthase (PEPS) by catalyzing its phosphorylation/dephosphorylation.</text>
</comment>
<comment type="catalytic activity">
    <reaction evidence="1">
        <text>[pyruvate, water dikinase] + ADP = [pyruvate, water dikinase]-phosphate + AMP + H(+)</text>
        <dbReference type="Rhea" id="RHEA:46020"/>
        <dbReference type="Rhea" id="RHEA-COMP:11425"/>
        <dbReference type="Rhea" id="RHEA-COMP:11426"/>
        <dbReference type="ChEBI" id="CHEBI:15378"/>
        <dbReference type="ChEBI" id="CHEBI:43176"/>
        <dbReference type="ChEBI" id="CHEBI:68546"/>
        <dbReference type="ChEBI" id="CHEBI:456215"/>
        <dbReference type="ChEBI" id="CHEBI:456216"/>
        <dbReference type="EC" id="2.7.11.33"/>
    </reaction>
</comment>
<comment type="catalytic activity">
    <reaction evidence="1">
        <text>[pyruvate, water dikinase]-phosphate + phosphate + H(+) = [pyruvate, water dikinase] + diphosphate</text>
        <dbReference type="Rhea" id="RHEA:48580"/>
        <dbReference type="Rhea" id="RHEA-COMP:11425"/>
        <dbReference type="Rhea" id="RHEA-COMP:11426"/>
        <dbReference type="ChEBI" id="CHEBI:15378"/>
        <dbReference type="ChEBI" id="CHEBI:33019"/>
        <dbReference type="ChEBI" id="CHEBI:43176"/>
        <dbReference type="ChEBI" id="CHEBI:43474"/>
        <dbReference type="ChEBI" id="CHEBI:68546"/>
        <dbReference type="EC" id="2.7.4.28"/>
    </reaction>
</comment>
<comment type="similarity">
    <text evidence="1">Belongs to the pyruvate, phosphate/water dikinase regulatory protein family. PSRP subfamily.</text>
</comment>
<dbReference type="EC" id="2.7.11.33" evidence="1"/>
<dbReference type="EC" id="2.7.4.28" evidence="1"/>
<dbReference type="EMBL" id="CP000681">
    <property type="protein sequence ID" value="ABP75965.1"/>
    <property type="molecule type" value="Genomic_DNA"/>
</dbReference>
<dbReference type="SMR" id="A4Y7N2"/>
<dbReference type="STRING" id="319224.Sputcn32_2244"/>
<dbReference type="KEGG" id="spc:Sputcn32_2244"/>
<dbReference type="eggNOG" id="COG1806">
    <property type="taxonomic scope" value="Bacteria"/>
</dbReference>
<dbReference type="HOGENOM" id="CLU_046206_1_0_6"/>
<dbReference type="GO" id="GO:0043531">
    <property type="term" value="F:ADP binding"/>
    <property type="evidence" value="ECO:0007669"/>
    <property type="project" value="UniProtKB-UniRule"/>
</dbReference>
<dbReference type="GO" id="GO:0005524">
    <property type="term" value="F:ATP binding"/>
    <property type="evidence" value="ECO:0007669"/>
    <property type="project" value="InterPro"/>
</dbReference>
<dbReference type="GO" id="GO:0016776">
    <property type="term" value="F:phosphotransferase activity, phosphate group as acceptor"/>
    <property type="evidence" value="ECO:0007669"/>
    <property type="project" value="UniProtKB-UniRule"/>
</dbReference>
<dbReference type="GO" id="GO:0004674">
    <property type="term" value="F:protein serine/threonine kinase activity"/>
    <property type="evidence" value="ECO:0007669"/>
    <property type="project" value="UniProtKB-UniRule"/>
</dbReference>
<dbReference type="HAMAP" id="MF_01062">
    <property type="entry name" value="PSRP"/>
    <property type="match status" value="1"/>
</dbReference>
<dbReference type="InterPro" id="IPR005177">
    <property type="entry name" value="Kinase-pyrophosphorylase"/>
</dbReference>
<dbReference type="InterPro" id="IPR026530">
    <property type="entry name" value="PSRP"/>
</dbReference>
<dbReference type="NCBIfam" id="NF003742">
    <property type="entry name" value="PRK05339.1"/>
    <property type="match status" value="1"/>
</dbReference>
<dbReference type="PANTHER" id="PTHR31756">
    <property type="entry name" value="PYRUVATE, PHOSPHATE DIKINASE REGULATORY PROTEIN 1, CHLOROPLASTIC"/>
    <property type="match status" value="1"/>
</dbReference>
<dbReference type="PANTHER" id="PTHR31756:SF3">
    <property type="entry name" value="PYRUVATE, PHOSPHATE DIKINASE REGULATORY PROTEIN 1, CHLOROPLASTIC"/>
    <property type="match status" value="1"/>
</dbReference>
<dbReference type="Pfam" id="PF03618">
    <property type="entry name" value="Kinase-PPPase"/>
    <property type="match status" value="1"/>
</dbReference>
<reference key="1">
    <citation type="submission" date="2007-04" db="EMBL/GenBank/DDBJ databases">
        <title>Complete sequence of Shewanella putrefaciens CN-32.</title>
        <authorList>
            <consortium name="US DOE Joint Genome Institute"/>
            <person name="Copeland A."/>
            <person name="Lucas S."/>
            <person name="Lapidus A."/>
            <person name="Barry K."/>
            <person name="Detter J.C."/>
            <person name="Glavina del Rio T."/>
            <person name="Hammon N."/>
            <person name="Israni S."/>
            <person name="Dalin E."/>
            <person name="Tice H."/>
            <person name="Pitluck S."/>
            <person name="Chain P."/>
            <person name="Malfatti S."/>
            <person name="Shin M."/>
            <person name="Vergez L."/>
            <person name="Schmutz J."/>
            <person name="Larimer F."/>
            <person name="Land M."/>
            <person name="Hauser L."/>
            <person name="Kyrpides N."/>
            <person name="Mikhailova N."/>
            <person name="Romine M.F."/>
            <person name="Fredrickson J."/>
            <person name="Tiedje J."/>
            <person name="Richardson P."/>
        </authorList>
    </citation>
    <scope>NUCLEOTIDE SEQUENCE [LARGE SCALE GENOMIC DNA]</scope>
    <source>
        <strain>CN-32 / ATCC BAA-453</strain>
    </source>
</reference>
<gene>
    <name type="ordered locus">Sputcn32_2244</name>
</gene>
<sequence length="270" mass="30732">MAPKVFYISDGTAITAEVFGHAVLSQFPLEFESLTIPFVETLAKAEQVKRQINDCFITTGERPLVFHSIVKAEIRDIIYSSEGVDYDFLNTFVAPLEQHLGVSASPVVHRTHGKANHGYEARIDAINFAMDNDDGQTMKHMDQADLILLGVSRCGKTPSSLYLSMQFGIKAANYPFTEDDMDNLKLPEALKRNKKKLFGLTIDPVRLHEIRQSRMENSRYSSLKQCRLEVKEVEMMFKRERIPYIDTTNHSVEEIATKILDVTGLERHMF</sequence>
<protein>
    <recommendedName>
        <fullName evidence="1">Putative phosphoenolpyruvate synthase regulatory protein</fullName>
        <shortName evidence="1">PEP synthase regulatory protein</shortName>
        <shortName evidence="1">PSRP</shortName>
        <ecNumber evidence="1">2.7.11.33</ecNumber>
        <ecNumber evidence="1">2.7.4.28</ecNumber>
    </recommendedName>
    <alternativeName>
        <fullName evidence="1">Pyruvate, water dikinase regulatory protein</fullName>
    </alternativeName>
</protein>
<organism>
    <name type="scientific">Shewanella putrefaciens (strain CN-32 / ATCC BAA-453)</name>
    <dbReference type="NCBI Taxonomy" id="319224"/>
    <lineage>
        <taxon>Bacteria</taxon>
        <taxon>Pseudomonadati</taxon>
        <taxon>Pseudomonadota</taxon>
        <taxon>Gammaproteobacteria</taxon>
        <taxon>Alteromonadales</taxon>
        <taxon>Shewanellaceae</taxon>
        <taxon>Shewanella</taxon>
    </lineage>
</organism>
<feature type="chain" id="PRO_0000316737" description="Putative phosphoenolpyruvate synthase regulatory protein">
    <location>
        <begin position="1"/>
        <end position="270"/>
    </location>
</feature>
<feature type="binding site" evidence="1">
    <location>
        <begin position="150"/>
        <end position="157"/>
    </location>
    <ligand>
        <name>ADP</name>
        <dbReference type="ChEBI" id="CHEBI:456216"/>
    </ligand>
</feature>
<keyword id="KW-0418">Kinase</keyword>
<keyword id="KW-0547">Nucleotide-binding</keyword>
<keyword id="KW-0723">Serine/threonine-protein kinase</keyword>
<keyword id="KW-0808">Transferase</keyword>
<accession>A4Y7N2</accession>
<name>PSRP_SHEPC</name>
<evidence type="ECO:0000255" key="1">
    <source>
        <dbReference type="HAMAP-Rule" id="MF_01062"/>
    </source>
</evidence>